<reference key="1">
    <citation type="submission" date="2007-03" db="EMBL/GenBank/DDBJ databases">
        <title>Complete sequence of chromosome of Methanococcus maripaludis C5.</title>
        <authorList>
            <consortium name="US DOE Joint Genome Institute"/>
            <person name="Copeland A."/>
            <person name="Lucas S."/>
            <person name="Lapidus A."/>
            <person name="Barry K."/>
            <person name="Glavina del Rio T."/>
            <person name="Dalin E."/>
            <person name="Tice H."/>
            <person name="Pitluck S."/>
            <person name="Chertkov O."/>
            <person name="Brettin T."/>
            <person name="Bruce D."/>
            <person name="Han C."/>
            <person name="Detter J.C."/>
            <person name="Schmutz J."/>
            <person name="Larimer F."/>
            <person name="Land M."/>
            <person name="Hauser L."/>
            <person name="Kyrpides N."/>
            <person name="Mikhailova N."/>
            <person name="Sieprawska-Lupa M."/>
            <person name="Whitman W.B."/>
            <person name="Richardson P."/>
        </authorList>
    </citation>
    <scope>NUCLEOTIDE SEQUENCE [LARGE SCALE GENOMIC DNA]</scope>
    <source>
        <strain>C5 / ATCC BAA-1333</strain>
    </source>
</reference>
<proteinExistence type="inferred from homology"/>
<protein>
    <recommendedName>
        <fullName evidence="1">Anthranilate phosphoribosyltransferase</fullName>
        <ecNumber evidence="1">2.4.2.18</ecNumber>
    </recommendedName>
</protein>
<feature type="chain" id="PRO_1000099816" description="Anthranilate phosphoribosyltransferase">
    <location>
        <begin position="1"/>
        <end position="321"/>
    </location>
</feature>
<feature type="binding site" evidence="1">
    <location>
        <position position="72"/>
    </location>
    <ligand>
        <name>5-phospho-alpha-D-ribose 1-diphosphate</name>
        <dbReference type="ChEBI" id="CHEBI:58017"/>
    </ligand>
</feature>
<feature type="binding site" evidence="1">
    <location>
        <position position="72"/>
    </location>
    <ligand>
        <name>anthranilate</name>
        <dbReference type="ChEBI" id="CHEBI:16567"/>
        <label>1</label>
    </ligand>
</feature>
<feature type="binding site" evidence="1">
    <location>
        <begin position="75"/>
        <end position="76"/>
    </location>
    <ligand>
        <name>5-phospho-alpha-D-ribose 1-diphosphate</name>
        <dbReference type="ChEBI" id="CHEBI:58017"/>
    </ligand>
</feature>
<feature type="binding site" evidence="1">
    <location>
        <position position="80"/>
    </location>
    <ligand>
        <name>5-phospho-alpha-D-ribose 1-diphosphate</name>
        <dbReference type="ChEBI" id="CHEBI:58017"/>
    </ligand>
</feature>
<feature type="binding site" evidence="1">
    <location>
        <begin position="82"/>
        <end position="85"/>
    </location>
    <ligand>
        <name>5-phospho-alpha-D-ribose 1-diphosphate</name>
        <dbReference type="ChEBI" id="CHEBI:58017"/>
    </ligand>
</feature>
<feature type="binding site" evidence="1">
    <location>
        <position position="84"/>
    </location>
    <ligand>
        <name>Mg(2+)</name>
        <dbReference type="ChEBI" id="CHEBI:18420"/>
        <label>1</label>
    </ligand>
</feature>
<feature type="binding site" evidence="1">
    <location>
        <begin position="99"/>
        <end position="107"/>
    </location>
    <ligand>
        <name>5-phospho-alpha-D-ribose 1-diphosphate</name>
        <dbReference type="ChEBI" id="CHEBI:58017"/>
    </ligand>
</feature>
<feature type="binding site" evidence="1">
    <location>
        <position position="102"/>
    </location>
    <ligand>
        <name>anthranilate</name>
        <dbReference type="ChEBI" id="CHEBI:16567"/>
        <label>1</label>
    </ligand>
</feature>
<feature type="binding site" evidence="1">
    <location>
        <position position="111"/>
    </location>
    <ligand>
        <name>5-phospho-alpha-D-ribose 1-diphosphate</name>
        <dbReference type="ChEBI" id="CHEBI:58017"/>
    </ligand>
</feature>
<feature type="binding site" evidence="1">
    <location>
        <position position="157"/>
    </location>
    <ligand>
        <name>anthranilate</name>
        <dbReference type="ChEBI" id="CHEBI:16567"/>
        <label>2</label>
    </ligand>
</feature>
<feature type="binding site" evidence="1">
    <location>
        <position position="216"/>
    </location>
    <ligand>
        <name>Mg(2+)</name>
        <dbReference type="ChEBI" id="CHEBI:18420"/>
        <label>2</label>
    </ligand>
</feature>
<feature type="binding site" evidence="1">
    <location>
        <position position="217"/>
    </location>
    <ligand>
        <name>Mg(2+)</name>
        <dbReference type="ChEBI" id="CHEBI:18420"/>
        <label>1</label>
    </ligand>
</feature>
<feature type="binding site" evidence="1">
    <location>
        <position position="217"/>
    </location>
    <ligand>
        <name>Mg(2+)</name>
        <dbReference type="ChEBI" id="CHEBI:18420"/>
        <label>2</label>
    </ligand>
</feature>
<sequence length="321" mass="34990">MLNKLIERENLSFKESYELFNMLLNESEMRIAAYLVALQTKGVTADEIAGFAKAMRDNAVKIDLGEVTDTCGTGGDGSKTINVSTAVSIILACFTKVAKHGNVSITSNSGSANVYEALGCKIPETPEDAKKSMDKTNFVFLFAQKYHPALKKIMPVRNELKVKTIFNILGPLANPANPKYQILGVNSAELCENVAFALSKVGGIKKALLVYGNGLDELTPNGTSKITEYDGKFDTYEVTPKDFGLDYSKIIPCESPDESAKRLIDVFSGKINEDRNFILMNAAAALYTSEIASDFLDGVEIAKEAIESGKVLKKLEEIRNV</sequence>
<dbReference type="EC" id="2.4.2.18" evidence="1"/>
<dbReference type="EMBL" id="CP000609">
    <property type="protein sequence ID" value="ABO34901.1"/>
    <property type="molecule type" value="Genomic_DNA"/>
</dbReference>
<dbReference type="RefSeq" id="WP_011868355.1">
    <property type="nucleotide sequence ID" value="NC_009135.1"/>
</dbReference>
<dbReference type="SMR" id="A4FXH2"/>
<dbReference type="STRING" id="402880.MmarC5_0587"/>
<dbReference type="GeneID" id="4929302"/>
<dbReference type="KEGG" id="mmq:MmarC5_0587"/>
<dbReference type="eggNOG" id="arCOG02012">
    <property type="taxonomic scope" value="Archaea"/>
</dbReference>
<dbReference type="HOGENOM" id="CLU_034315_3_1_2"/>
<dbReference type="OrthoDB" id="8214at2157"/>
<dbReference type="UniPathway" id="UPA00035">
    <property type="reaction ID" value="UER00041"/>
</dbReference>
<dbReference type="Proteomes" id="UP000000253">
    <property type="component" value="Chromosome"/>
</dbReference>
<dbReference type="GO" id="GO:0005829">
    <property type="term" value="C:cytosol"/>
    <property type="evidence" value="ECO:0007669"/>
    <property type="project" value="TreeGrafter"/>
</dbReference>
<dbReference type="GO" id="GO:0004048">
    <property type="term" value="F:anthranilate phosphoribosyltransferase activity"/>
    <property type="evidence" value="ECO:0007669"/>
    <property type="project" value="UniProtKB-UniRule"/>
</dbReference>
<dbReference type="GO" id="GO:0000287">
    <property type="term" value="F:magnesium ion binding"/>
    <property type="evidence" value="ECO:0007669"/>
    <property type="project" value="UniProtKB-UniRule"/>
</dbReference>
<dbReference type="GO" id="GO:0000162">
    <property type="term" value="P:L-tryptophan biosynthetic process"/>
    <property type="evidence" value="ECO:0007669"/>
    <property type="project" value="UniProtKB-UniRule"/>
</dbReference>
<dbReference type="FunFam" id="3.40.1030.10:FF:000010">
    <property type="entry name" value="Anthranilate phosphoribosyltransferase"/>
    <property type="match status" value="1"/>
</dbReference>
<dbReference type="Gene3D" id="3.40.1030.10">
    <property type="entry name" value="Nucleoside phosphorylase/phosphoribosyltransferase catalytic domain"/>
    <property type="match status" value="1"/>
</dbReference>
<dbReference type="Gene3D" id="1.20.970.10">
    <property type="entry name" value="Transferase, Pyrimidine Nucleoside Phosphorylase, Chain C"/>
    <property type="match status" value="1"/>
</dbReference>
<dbReference type="HAMAP" id="MF_00211">
    <property type="entry name" value="TrpD"/>
    <property type="match status" value="1"/>
</dbReference>
<dbReference type="InterPro" id="IPR005940">
    <property type="entry name" value="Anthranilate_Pribosyl_Tfrase"/>
</dbReference>
<dbReference type="InterPro" id="IPR000312">
    <property type="entry name" value="Glycosyl_Trfase_fam3"/>
</dbReference>
<dbReference type="InterPro" id="IPR017459">
    <property type="entry name" value="Glycosyl_Trfase_fam3_N_dom"/>
</dbReference>
<dbReference type="InterPro" id="IPR036320">
    <property type="entry name" value="Glycosyl_Trfase_fam3_N_dom_sf"/>
</dbReference>
<dbReference type="InterPro" id="IPR035902">
    <property type="entry name" value="Nuc_phospho_transferase"/>
</dbReference>
<dbReference type="NCBIfam" id="TIGR01245">
    <property type="entry name" value="trpD"/>
    <property type="match status" value="1"/>
</dbReference>
<dbReference type="PANTHER" id="PTHR43285">
    <property type="entry name" value="ANTHRANILATE PHOSPHORIBOSYLTRANSFERASE"/>
    <property type="match status" value="1"/>
</dbReference>
<dbReference type="PANTHER" id="PTHR43285:SF2">
    <property type="entry name" value="ANTHRANILATE PHOSPHORIBOSYLTRANSFERASE"/>
    <property type="match status" value="1"/>
</dbReference>
<dbReference type="Pfam" id="PF02885">
    <property type="entry name" value="Glycos_trans_3N"/>
    <property type="match status" value="1"/>
</dbReference>
<dbReference type="Pfam" id="PF00591">
    <property type="entry name" value="Glycos_transf_3"/>
    <property type="match status" value="1"/>
</dbReference>
<dbReference type="SUPFAM" id="SSF52418">
    <property type="entry name" value="Nucleoside phosphorylase/phosphoribosyltransferase catalytic domain"/>
    <property type="match status" value="1"/>
</dbReference>
<dbReference type="SUPFAM" id="SSF47648">
    <property type="entry name" value="Nucleoside phosphorylase/phosphoribosyltransferase N-terminal domain"/>
    <property type="match status" value="1"/>
</dbReference>
<evidence type="ECO:0000255" key="1">
    <source>
        <dbReference type="HAMAP-Rule" id="MF_00211"/>
    </source>
</evidence>
<gene>
    <name evidence="1" type="primary">trpD</name>
    <name type="ordered locus">MmarC5_0587</name>
</gene>
<accession>A4FXH2</accession>
<organism>
    <name type="scientific">Methanococcus maripaludis (strain C5 / ATCC BAA-1333)</name>
    <dbReference type="NCBI Taxonomy" id="402880"/>
    <lineage>
        <taxon>Archaea</taxon>
        <taxon>Methanobacteriati</taxon>
        <taxon>Methanobacteriota</taxon>
        <taxon>Methanomada group</taxon>
        <taxon>Methanococci</taxon>
        <taxon>Methanococcales</taxon>
        <taxon>Methanococcaceae</taxon>
        <taxon>Methanococcus</taxon>
    </lineage>
</organism>
<keyword id="KW-0028">Amino-acid biosynthesis</keyword>
<keyword id="KW-0057">Aromatic amino acid biosynthesis</keyword>
<keyword id="KW-0328">Glycosyltransferase</keyword>
<keyword id="KW-0460">Magnesium</keyword>
<keyword id="KW-0479">Metal-binding</keyword>
<keyword id="KW-0808">Transferase</keyword>
<keyword id="KW-0822">Tryptophan biosynthesis</keyword>
<comment type="function">
    <text evidence="1">Catalyzes the transfer of the phosphoribosyl group of 5-phosphorylribose-1-pyrophosphate (PRPP) to anthranilate to yield N-(5'-phosphoribosyl)-anthranilate (PRA).</text>
</comment>
<comment type="catalytic activity">
    <reaction evidence="1">
        <text>N-(5-phospho-beta-D-ribosyl)anthranilate + diphosphate = 5-phospho-alpha-D-ribose 1-diphosphate + anthranilate</text>
        <dbReference type="Rhea" id="RHEA:11768"/>
        <dbReference type="ChEBI" id="CHEBI:16567"/>
        <dbReference type="ChEBI" id="CHEBI:18277"/>
        <dbReference type="ChEBI" id="CHEBI:33019"/>
        <dbReference type="ChEBI" id="CHEBI:58017"/>
        <dbReference type="EC" id="2.4.2.18"/>
    </reaction>
</comment>
<comment type="cofactor">
    <cofactor evidence="1">
        <name>Mg(2+)</name>
        <dbReference type="ChEBI" id="CHEBI:18420"/>
    </cofactor>
    <text evidence="1">Binds 2 magnesium ions per monomer.</text>
</comment>
<comment type="pathway">
    <text evidence="1">Amino-acid biosynthesis; L-tryptophan biosynthesis; L-tryptophan from chorismate: step 2/5.</text>
</comment>
<comment type="subunit">
    <text evidence="1">Homodimer.</text>
</comment>
<comment type="similarity">
    <text evidence="1">Belongs to the anthranilate phosphoribosyltransferase family.</text>
</comment>
<name>TRPD_METM5</name>